<proteinExistence type="inferred from homology"/>
<gene>
    <name evidence="1" type="primary">nhaB</name>
    <name type="ordered locus">Spro_2749</name>
</gene>
<organism>
    <name type="scientific">Serratia proteamaculans (strain 568)</name>
    <dbReference type="NCBI Taxonomy" id="399741"/>
    <lineage>
        <taxon>Bacteria</taxon>
        <taxon>Pseudomonadati</taxon>
        <taxon>Pseudomonadota</taxon>
        <taxon>Gammaproteobacteria</taxon>
        <taxon>Enterobacterales</taxon>
        <taxon>Yersiniaceae</taxon>
        <taxon>Serratia</taxon>
    </lineage>
</organism>
<reference key="1">
    <citation type="submission" date="2007-09" db="EMBL/GenBank/DDBJ databases">
        <title>Complete sequence of chromosome of Serratia proteamaculans 568.</title>
        <authorList>
            <consortium name="US DOE Joint Genome Institute"/>
            <person name="Copeland A."/>
            <person name="Lucas S."/>
            <person name="Lapidus A."/>
            <person name="Barry K."/>
            <person name="Glavina del Rio T."/>
            <person name="Dalin E."/>
            <person name="Tice H."/>
            <person name="Pitluck S."/>
            <person name="Chain P."/>
            <person name="Malfatti S."/>
            <person name="Shin M."/>
            <person name="Vergez L."/>
            <person name="Schmutz J."/>
            <person name="Larimer F."/>
            <person name="Land M."/>
            <person name="Hauser L."/>
            <person name="Kyrpides N."/>
            <person name="Kim E."/>
            <person name="Taghavi S."/>
            <person name="Newman L."/>
            <person name="Vangronsveld J."/>
            <person name="van der Lelie D."/>
            <person name="Richardson P."/>
        </authorList>
    </citation>
    <scope>NUCLEOTIDE SEQUENCE [LARGE SCALE GENOMIC DNA]</scope>
    <source>
        <strain>568</strain>
    </source>
</reference>
<sequence length="526" mass="57403">METTFRSALVKNFLGQSPDWYKLAILVFLVVNPLVFFLVDPFIAGWLLVVEFIFTLAMALKCYPLLPGGLLAIESVLIGMTSPDRVGEEIAHNLEVLLLLIFMVAGIYFMKQLLLFVFTKLLLNIRSKMLLSLAFCFAAALLSAFLDALTVVAVVISVATGFYSIYHNVASNRSDGNDGNIDVGDDSTLVSDDHKQTLEQFRAFLRSLLMHAGVGTALGGVMTMVGEPQNLIIAKSAGWGFVDFFLRMAPVTLPVFACGLLVCLLLERFGVFGYGAKLPERVREVLTEFDRQATAGRSKQEQVRLVVQALIGIWLVVALAFHLAEVGLIGLSVIILATSLCGVTDEHAIGKAFQEALPFTALLTVFFTVVAVIIEQHLFTPIIHFVLQAQPSSQLALFYLFNGLLSSVSDNVFVGTVYINEARAAFENGVISLKQFEMLAVAINTGTNLPSVATPNGQAAFLFLLTSALAPLVRLSYGRMVWMALPYTVVLTLVGLLCVQFTLAPATELLTQWHWLTLPSIEAATH</sequence>
<comment type="function">
    <text evidence="1">Na(+)/H(+) antiporter that extrudes sodium in exchange for external protons.</text>
</comment>
<comment type="catalytic activity">
    <reaction evidence="1">
        <text>2 Na(+)(in) + 3 H(+)(out) = 2 Na(+)(out) + 3 H(+)(in)</text>
        <dbReference type="Rhea" id="RHEA:29247"/>
        <dbReference type="ChEBI" id="CHEBI:15378"/>
        <dbReference type="ChEBI" id="CHEBI:29101"/>
    </reaction>
    <physiologicalReaction direction="left-to-right" evidence="1">
        <dbReference type="Rhea" id="RHEA:29248"/>
    </physiologicalReaction>
</comment>
<comment type="subcellular location">
    <subcellularLocation>
        <location evidence="1">Cell inner membrane</location>
        <topology evidence="1">Multi-pass membrane protein</topology>
    </subcellularLocation>
</comment>
<comment type="similarity">
    <text evidence="1">Belongs to the NhaB Na(+)/H(+) (TC 2.A.34) antiporter family.</text>
</comment>
<dbReference type="EMBL" id="CP000826">
    <property type="protein sequence ID" value="ABV41850.1"/>
    <property type="molecule type" value="Genomic_DNA"/>
</dbReference>
<dbReference type="SMR" id="A8GFG0"/>
<dbReference type="STRING" id="399741.Spro_2749"/>
<dbReference type="KEGG" id="spe:Spro_2749"/>
<dbReference type="eggNOG" id="COG3067">
    <property type="taxonomic scope" value="Bacteria"/>
</dbReference>
<dbReference type="HOGENOM" id="CLU_041110_0_0_6"/>
<dbReference type="OrthoDB" id="5288732at2"/>
<dbReference type="GO" id="GO:0005886">
    <property type="term" value="C:plasma membrane"/>
    <property type="evidence" value="ECO:0007669"/>
    <property type="project" value="UniProtKB-SubCell"/>
</dbReference>
<dbReference type="GO" id="GO:0015385">
    <property type="term" value="F:sodium:proton antiporter activity"/>
    <property type="evidence" value="ECO:0007669"/>
    <property type="project" value="InterPro"/>
</dbReference>
<dbReference type="HAMAP" id="MF_01599">
    <property type="entry name" value="NhaB"/>
    <property type="match status" value="1"/>
</dbReference>
<dbReference type="InterPro" id="IPR004671">
    <property type="entry name" value="Na+/H+_antiporter_NhaB"/>
</dbReference>
<dbReference type="NCBIfam" id="TIGR00774">
    <property type="entry name" value="NhaB"/>
    <property type="match status" value="1"/>
</dbReference>
<dbReference type="NCBIfam" id="NF007093">
    <property type="entry name" value="PRK09547.1"/>
    <property type="match status" value="1"/>
</dbReference>
<dbReference type="PANTHER" id="PTHR43302:SF1">
    <property type="entry name" value="NA(+)_H(+) ANTIPORTER NHAB"/>
    <property type="match status" value="1"/>
</dbReference>
<dbReference type="PANTHER" id="PTHR43302">
    <property type="entry name" value="TRANSPORTER ARSB-RELATED"/>
    <property type="match status" value="1"/>
</dbReference>
<dbReference type="Pfam" id="PF06450">
    <property type="entry name" value="NhaB"/>
    <property type="match status" value="1"/>
</dbReference>
<dbReference type="PRINTS" id="PR00173">
    <property type="entry name" value="EDTRNSPORT"/>
</dbReference>
<name>NHAB_SERP5</name>
<keyword id="KW-0050">Antiport</keyword>
<keyword id="KW-0997">Cell inner membrane</keyword>
<keyword id="KW-1003">Cell membrane</keyword>
<keyword id="KW-0406">Ion transport</keyword>
<keyword id="KW-0472">Membrane</keyword>
<keyword id="KW-0915">Sodium</keyword>
<keyword id="KW-0739">Sodium transport</keyword>
<keyword id="KW-0812">Transmembrane</keyword>
<keyword id="KW-1133">Transmembrane helix</keyword>
<keyword id="KW-0813">Transport</keyword>
<evidence type="ECO:0000255" key="1">
    <source>
        <dbReference type="HAMAP-Rule" id="MF_01599"/>
    </source>
</evidence>
<protein>
    <recommendedName>
        <fullName evidence="1">Na(+)/H(+) antiporter NhaB</fullName>
    </recommendedName>
    <alternativeName>
        <fullName evidence="1">Sodium/proton antiporter NhaB</fullName>
    </alternativeName>
</protein>
<accession>A8GFG0</accession>
<feature type="chain" id="PRO_0000333122" description="Na(+)/H(+) antiporter NhaB">
    <location>
        <begin position="1"/>
        <end position="526"/>
    </location>
</feature>
<feature type="transmembrane region" description="Helical" evidence="1">
    <location>
        <begin position="13"/>
        <end position="33"/>
    </location>
</feature>
<feature type="transmembrane region" description="Helical" evidence="1">
    <location>
        <begin position="98"/>
        <end position="118"/>
    </location>
</feature>
<feature type="transmembrane region" description="Helical" evidence="1">
    <location>
        <begin position="133"/>
        <end position="155"/>
    </location>
</feature>
<feature type="transmembrane region" description="Helical" evidence="1">
    <location>
        <begin position="208"/>
        <end position="228"/>
    </location>
</feature>
<feature type="transmembrane region" description="Helical" evidence="1">
    <location>
        <begin position="244"/>
        <end position="264"/>
    </location>
</feature>
<feature type="transmembrane region" description="Helical" evidence="1">
    <location>
        <begin position="309"/>
        <end position="329"/>
    </location>
</feature>
<feature type="transmembrane region" description="Helical" evidence="1">
    <location>
        <begin position="355"/>
        <end position="375"/>
    </location>
</feature>
<feature type="transmembrane region" description="Helical" evidence="1">
    <location>
        <begin position="395"/>
        <end position="415"/>
    </location>
</feature>
<feature type="transmembrane region" description="Helical" evidence="1">
    <location>
        <begin position="452"/>
        <end position="472"/>
    </location>
</feature>
<feature type="transmembrane region" description="Helical" evidence="1">
    <location>
        <begin position="481"/>
        <end position="501"/>
    </location>
</feature>